<comment type="similarity">
    <text evidence="1">To M.jannaschii MJ1436.</text>
</comment>
<organism>
    <name type="scientific">Methanothermobacter thermautotrophicus (strain ATCC 29096 / DSM 1053 / JCM 10044 / NBRC 100330 / Delta H)</name>
    <name type="common">Methanobacterium thermoautotrophicum</name>
    <dbReference type="NCBI Taxonomy" id="187420"/>
    <lineage>
        <taxon>Archaea</taxon>
        <taxon>Methanobacteriati</taxon>
        <taxon>Methanobacteriota</taxon>
        <taxon>Methanomada group</taxon>
        <taxon>Methanobacteria</taxon>
        <taxon>Methanobacteriales</taxon>
        <taxon>Methanobacteriaceae</taxon>
        <taxon>Methanothermobacter</taxon>
    </lineage>
</organism>
<feature type="chain" id="PRO_0000107328" description="Uncharacterized protein MTH_1236">
    <location>
        <begin position="1"/>
        <end position="89"/>
    </location>
</feature>
<reference key="1">
    <citation type="journal article" date="1997" name="J. Bacteriol.">
        <title>Complete genome sequence of Methanobacterium thermoautotrophicum deltaH: functional analysis and comparative genomics.</title>
        <authorList>
            <person name="Smith D.R."/>
            <person name="Doucette-Stamm L.A."/>
            <person name="Deloughery C."/>
            <person name="Lee H.-M."/>
            <person name="Dubois J."/>
            <person name="Aldredge T."/>
            <person name="Bashirzadeh R."/>
            <person name="Blakely D."/>
            <person name="Cook R."/>
            <person name="Gilbert K."/>
            <person name="Harrison D."/>
            <person name="Hoang L."/>
            <person name="Keagle P."/>
            <person name="Lumm W."/>
            <person name="Pothier B."/>
            <person name="Qiu D."/>
            <person name="Spadafora R."/>
            <person name="Vicare R."/>
            <person name="Wang Y."/>
            <person name="Wierzbowski J."/>
            <person name="Gibson R."/>
            <person name="Jiwani N."/>
            <person name="Caruso A."/>
            <person name="Bush D."/>
            <person name="Safer H."/>
            <person name="Patwell D."/>
            <person name="Prabhakar S."/>
            <person name="McDougall S."/>
            <person name="Shimer G."/>
            <person name="Goyal A."/>
            <person name="Pietrovski S."/>
            <person name="Church G.M."/>
            <person name="Daniels C.J."/>
            <person name="Mao J.-I."/>
            <person name="Rice P."/>
            <person name="Noelling J."/>
            <person name="Reeve J.N."/>
        </authorList>
    </citation>
    <scope>NUCLEOTIDE SEQUENCE [LARGE SCALE GENOMIC DNA]</scope>
    <source>
        <strain>ATCC 29096 / DSM 1053 / JCM 10044 / NBRC 100330 / Delta H</strain>
    </source>
</reference>
<dbReference type="EMBL" id="AE000666">
    <property type="protein sequence ID" value="AAB85725.1"/>
    <property type="molecule type" value="Genomic_DNA"/>
</dbReference>
<dbReference type="PIR" id="B69032">
    <property type="entry name" value="B69032"/>
</dbReference>
<dbReference type="SMR" id="O27304"/>
<dbReference type="STRING" id="187420.MTH_1236"/>
<dbReference type="PaxDb" id="187420-MTH_1236"/>
<dbReference type="EnsemblBacteria" id="AAB85725">
    <property type="protein sequence ID" value="AAB85725"/>
    <property type="gene ID" value="MTH_1236"/>
</dbReference>
<dbReference type="KEGG" id="mth:MTH_1236"/>
<dbReference type="PATRIC" id="fig|187420.15.peg.1215"/>
<dbReference type="HOGENOM" id="CLU_162437_0_0_2"/>
<dbReference type="InParanoid" id="O27304"/>
<dbReference type="Proteomes" id="UP000005223">
    <property type="component" value="Chromosome"/>
</dbReference>
<dbReference type="InterPro" id="IPR019597">
    <property type="entry name" value="Energy-convert_hydgase-B_suP"/>
</dbReference>
<dbReference type="Pfam" id="PF10622">
    <property type="entry name" value="Ehbp"/>
    <property type="match status" value="1"/>
</dbReference>
<gene>
    <name type="ordered locus">MTH_1236</name>
</gene>
<accession>O27304</accession>
<keyword id="KW-1185">Reference proteome</keyword>
<name>Y1236_METTH</name>
<protein>
    <recommendedName>
        <fullName>Uncharacterized protein MTH_1236</fullName>
    </recommendedName>
</protein>
<evidence type="ECO:0000305" key="1"/>
<sequence>MSEGDSMKMVIRPRHMISLGGYIVELEFPYRNLIVVNPTDEHIKIEVPVFDEEWIEEHRKLGLKIVPVGDDDNYLSLWRREKALLEASD</sequence>
<proteinExistence type="predicted"/>